<sequence>MPNHIVLYQPEIPANTGNISRTCAGTDTYLHLIRPLGFSTDDKMLKRAGLDYWDNVKLSYYDSLDEFFEKNEGGEFYYITKFGRHVYSDIDYSDPNKDYFFVFGKETTGLPDALLQKNEENCLRIPMTDHIRSLNLSNTAAILAYEALRQQNFGALLQEPNYDRKIFQD</sequence>
<organism>
    <name type="scientific">Listeria monocytogenes serotype 4b (strain F2365)</name>
    <dbReference type="NCBI Taxonomy" id="265669"/>
    <lineage>
        <taxon>Bacteria</taxon>
        <taxon>Bacillati</taxon>
        <taxon>Bacillota</taxon>
        <taxon>Bacilli</taxon>
        <taxon>Bacillales</taxon>
        <taxon>Listeriaceae</taxon>
        <taxon>Listeria</taxon>
    </lineage>
</organism>
<proteinExistence type="inferred from homology"/>
<evidence type="ECO:0000255" key="1">
    <source>
        <dbReference type="HAMAP-Rule" id="MF_01885"/>
    </source>
</evidence>
<reference key="1">
    <citation type="journal article" date="2004" name="Nucleic Acids Res.">
        <title>Whole genome comparisons of serotype 4b and 1/2a strains of the food-borne pathogen Listeria monocytogenes reveal new insights into the core genome components of this species.</title>
        <authorList>
            <person name="Nelson K.E."/>
            <person name="Fouts D.E."/>
            <person name="Mongodin E.F."/>
            <person name="Ravel J."/>
            <person name="DeBoy R.T."/>
            <person name="Kolonay J.F."/>
            <person name="Rasko D.A."/>
            <person name="Angiuoli S.V."/>
            <person name="Gill S.R."/>
            <person name="Paulsen I.T."/>
            <person name="Peterson J.D."/>
            <person name="White O."/>
            <person name="Nelson W.C."/>
            <person name="Nierman W.C."/>
            <person name="Beanan M.J."/>
            <person name="Brinkac L.M."/>
            <person name="Daugherty S.C."/>
            <person name="Dodson R.J."/>
            <person name="Durkin A.S."/>
            <person name="Madupu R."/>
            <person name="Haft D.H."/>
            <person name="Selengut J."/>
            <person name="Van Aken S.E."/>
            <person name="Khouri H.M."/>
            <person name="Fedorova N."/>
            <person name="Forberger H.A."/>
            <person name="Tran B."/>
            <person name="Kathariou S."/>
            <person name="Wonderling L.D."/>
            <person name="Uhlich G.A."/>
            <person name="Bayles D.O."/>
            <person name="Luchansky J.B."/>
            <person name="Fraser C.M."/>
        </authorList>
    </citation>
    <scope>NUCLEOTIDE SEQUENCE [LARGE SCALE GENOMIC DNA]</scope>
    <source>
        <strain>F2365</strain>
    </source>
</reference>
<name>TRML_LISMF</name>
<accession>Q721N0</accession>
<protein>
    <recommendedName>
        <fullName evidence="1">Putative tRNA (cytidine(34)-2'-O)-methyltransferase</fullName>
        <ecNumber evidence="1">2.1.1.207</ecNumber>
    </recommendedName>
    <alternativeName>
        <fullName evidence="1">tRNA (cytidine/uridine-2'-O-)-methyltransferase</fullName>
    </alternativeName>
</protein>
<gene>
    <name type="ordered locus">LMOf2365_0956</name>
</gene>
<feature type="chain" id="PRO_0000159832" description="Putative tRNA (cytidine(34)-2'-O)-methyltransferase">
    <location>
        <begin position="1"/>
        <end position="169"/>
    </location>
</feature>
<feature type="binding site" evidence="1">
    <location>
        <position position="79"/>
    </location>
    <ligand>
        <name>S-adenosyl-L-methionine</name>
        <dbReference type="ChEBI" id="CHEBI:59789"/>
    </ligand>
</feature>
<feature type="binding site" evidence="1">
    <location>
        <position position="104"/>
    </location>
    <ligand>
        <name>S-adenosyl-L-methionine</name>
        <dbReference type="ChEBI" id="CHEBI:59789"/>
    </ligand>
</feature>
<feature type="binding site" evidence="1">
    <location>
        <position position="125"/>
    </location>
    <ligand>
        <name>S-adenosyl-L-methionine</name>
        <dbReference type="ChEBI" id="CHEBI:59789"/>
    </ligand>
</feature>
<feature type="binding site" evidence="1">
    <location>
        <position position="133"/>
    </location>
    <ligand>
        <name>S-adenosyl-L-methionine</name>
        <dbReference type="ChEBI" id="CHEBI:59789"/>
    </ligand>
</feature>
<comment type="function">
    <text evidence="1">Could methylate the ribose at the nucleotide 34 wobble position in tRNA.</text>
</comment>
<comment type="catalytic activity">
    <reaction evidence="1">
        <text>cytidine(34) in tRNA + S-adenosyl-L-methionine = 2'-O-methylcytidine(34) in tRNA + S-adenosyl-L-homocysteine + H(+)</text>
        <dbReference type="Rhea" id="RHEA:43084"/>
        <dbReference type="Rhea" id="RHEA-COMP:10331"/>
        <dbReference type="Rhea" id="RHEA-COMP:10332"/>
        <dbReference type="ChEBI" id="CHEBI:15378"/>
        <dbReference type="ChEBI" id="CHEBI:57856"/>
        <dbReference type="ChEBI" id="CHEBI:59789"/>
        <dbReference type="ChEBI" id="CHEBI:74495"/>
        <dbReference type="ChEBI" id="CHEBI:82748"/>
        <dbReference type="EC" id="2.1.1.207"/>
    </reaction>
</comment>
<comment type="catalytic activity">
    <reaction evidence="1">
        <text>5-carboxymethylaminomethyluridine(34) in tRNA(Leu) + S-adenosyl-L-methionine = 5-carboxymethylaminomethyl-2'-O-methyluridine(34) in tRNA(Leu) + S-adenosyl-L-homocysteine + H(+)</text>
        <dbReference type="Rhea" id="RHEA:43088"/>
        <dbReference type="Rhea" id="RHEA-COMP:10333"/>
        <dbReference type="Rhea" id="RHEA-COMP:10334"/>
        <dbReference type="ChEBI" id="CHEBI:15378"/>
        <dbReference type="ChEBI" id="CHEBI:57856"/>
        <dbReference type="ChEBI" id="CHEBI:59789"/>
        <dbReference type="ChEBI" id="CHEBI:74508"/>
        <dbReference type="ChEBI" id="CHEBI:74511"/>
        <dbReference type="EC" id="2.1.1.207"/>
    </reaction>
</comment>
<comment type="subcellular location">
    <subcellularLocation>
        <location evidence="1">Cytoplasm</location>
    </subcellularLocation>
</comment>
<comment type="similarity">
    <text evidence="1">Belongs to the class IV-like SAM-binding methyltransferase superfamily. RNA methyltransferase TrmH family. TrmL subfamily.</text>
</comment>
<dbReference type="EC" id="2.1.1.207" evidence="1"/>
<dbReference type="EMBL" id="AE017262">
    <property type="protein sequence ID" value="AAT03734.1"/>
    <property type="molecule type" value="Genomic_DNA"/>
</dbReference>
<dbReference type="SMR" id="Q721N0"/>
<dbReference type="KEGG" id="lmf:LMOf2365_0956"/>
<dbReference type="HOGENOM" id="CLU_110125_0_0_9"/>
<dbReference type="GO" id="GO:0005737">
    <property type="term" value="C:cytoplasm"/>
    <property type="evidence" value="ECO:0007669"/>
    <property type="project" value="UniProtKB-SubCell"/>
</dbReference>
<dbReference type="GO" id="GO:0003723">
    <property type="term" value="F:RNA binding"/>
    <property type="evidence" value="ECO:0007669"/>
    <property type="project" value="InterPro"/>
</dbReference>
<dbReference type="GO" id="GO:0141102">
    <property type="term" value="F:tRNA (5-carboxymethylaminomethyluridine(34)-2'-O)-methyltransferase activity"/>
    <property type="evidence" value="ECO:0007669"/>
    <property type="project" value="RHEA"/>
</dbReference>
<dbReference type="GO" id="GO:0141098">
    <property type="term" value="F:tRNA (cytidine(34)-2'-O)-methyltransferase activity"/>
    <property type="evidence" value="ECO:0007669"/>
    <property type="project" value="RHEA"/>
</dbReference>
<dbReference type="GO" id="GO:0002130">
    <property type="term" value="P:wobble position ribose methylation"/>
    <property type="evidence" value="ECO:0007669"/>
    <property type="project" value="TreeGrafter"/>
</dbReference>
<dbReference type="CDD" id="cd18094">
    <property type="entry name" value="SpoU-like_TrmL"/>
    <property type="match status" value="1"/>
</dbReference>
<dbReference type="FunFam" id="3.40.1280.10:FF:000002">
    <property type="entry name" value="Peptidylprolyl isomerase"/>
    <property type="match status" value="1"/>
</dbReference>
<dbReference type="Gene3D" id="3.40.1280.10">
    <property type="match status" value="1"/>
</dbReference>
<dbReference type="HAMAP" id="MF_01885">
    <property type="entry name" value="tRNA_methyltr_TrmL"/>
    <property type="match status" value="1"/>
</dbReference>
<dbReference type="InterPro" id="IPR029028">
    <property type="entry name" value="Alpha/beta_knot_MTases"/>
</dbReference>
<dbReference type="InterPro" id="IPR001537">
    <property type="entry name" value="SpoU_MeTrfase"/>
</dbReference>
<dbReference type="InterPro" id="IPR016914">
    <property type="entry name" value="TrmL"/>
</dbReference>
<dbReference type="InterPro" id="IPR029026">
    <property type="entry name" value="tRNA_m1G_MTases_N"/>
</dbReference>
<dbReference type="NCBIfam" id="TIGR00185">
    <property type="entry name" value="tRNA_yibK_trmL"/>
    <property type="match status" value="1"/>
</dbReference>
<dbReference type="PANTHER" id="PTHR42971">
    <property type="entry name" value="TRNA (CYTIDINE(34)-2'-O)-METHYLTRANSFERASE"/>
    <property type="match status" value="1"/>
</dbReference>
<dbReference type="PANTHER" id="PTHR42971:SF1">
    <property type="entry name" value="TRNA (CYTIDINE(34)-2'-O)-METHYLTRANSFERASE"/>
    <property type="match status" value="1"/>
</dbReference>
<dbReference type="Pfam" id="PF00588">
    <property type="entry name" value="SpoU_methylase"/>
    <property type="match status" value="1"/>
</dbReference>
<dbReference type="PIRSF" id="PIRSF029256">
    <property type="entry name" value="SpoU_TrmH_prd"/>
    <property type="match status" value="1"/>
</dbReference>
<dbReference type="SUPFAM" id="SSF75217">
    <property type="entry name" value="alpha/beta knot"/>
    <property type="match status" value="1"/>
</dbReference>
<keyword id="KW-0963">Cytoplasm</keyword>
<keyword id="KW-0489">Methyltransferase</keyword>
<keyword id="KW-0949">S-adenosyl-L-methionine</keyword>
<keyword id="KW-0808">Transferase</keyword>
<keyword id="KW-0819">tRNA processing</keyword>